<feature type="chain" id="PRO_0000280677" description="2',3'-cyclic-nucleotide 3'-phosphodiesterase">
    <location>
        <begin position="1"/>
        <end position="237"/>
    </location>
</feature>
<feature type="region of interest" description="Disordered" evidence="2">
    <location>
        <begin position="117"/>
        <end position="137"/>
    </location>
</feature>
<feature type="active site" description="Proton donor/acceptor" evidence="1">
    <location>
        <position position="21"/>
    </location>
</feature>
<feature type="active site" description="Proton donor/acceptor" evidence="1">
    <location>
        <position position="167"/>
    </location>
</feature>
<feature type="binding site" evidence="1">
    <location>
        <position position="23"/>
    </location>
    <ligand>
        <name>substrate</name>
    </ligand>
</feature>
<feature type="binding site" evidence="1">
    <location>
        <position position="169"/>
    </location>
    <ligand>
        <name>substrate</name>
    </ligand>
</feature>
<feature type="binding site" evidence="1">
    <location>
        <position position="172"/>
    </location>
    <ligand>
        <name>substrate</name>
    </ligand>
</feature>
<dbReference type="EC" id="3.1.4.37"/>
<dbReference type="EMBL" id="CR382139">
    <property type="protein sequence ID" value="CAG91069.2"/>
    <property type="molecule type" value="Genomic_DNA"/>
</dbReference>
<dbReference type="RefSeq" id="XP_462558.2">
    <property type="nucleotide sequence ID" value="XM_462558.2"/>
</dbReference>
<dbReference type="FunCoup" id="Q6BGW3">
    <property type="interactions" value="10"/>
</dbReference>
<dbReference type="STRING" id="284592.Q6BGW3"/>
<dbReference type="GeneID" id="2905514"/>
<dbReference type="KEGG" id="dha:DEHA2G23430g"/>
<dbReference type="VEuPathDB" id="FungiDB:DEHA2G23430g"/>
<dbReference type="eggNOG" id="ENOG502RY6J">
    <property type="taxonomic scope" value="Eukaryota"/>
</dbReference>
<dbReference type="HOGENOM" id="CLU_088289_0_0_1"/>
<dbReference type="InParanoid" id="Q6BGW3"/>
<dbReference type="OMA" id="FEPHITI"/>
<dbReference type="OrthoDB" id="514292at2759"/>
<dbReference type="Proteomes" id="UP000000599">
    <property type="component" value="Chromosome G"/>
</dbReference>
<dbReference type="GO" id="GO:0005794">
    <property type="term" value="C:Golgi apparatus"/>
    <property type="evidence" value="ECO:0007669"/>
    <property type="project" value="UniProtKB-SubCell"/>
</dbReference>
<dbReference type="GO" id="GO:0004113">
    <property type="term" value="F:2',3'-cyclic-nucleotide 3'-phosphodiesterase activity"/>
    <property type="evidence" value="ECO:0007669"/>
    <property type="project" value="UniProtKB-EC"/>
</dbReference>
<dbReference type="GO" id="GO:0009187">
    <property type="term" value="P:cyclic nucleotide metabolic process"/>
    <property type="evidence" value="ECO:0007669"/>
    <property type="project" value="TreeGrafter"/>
</dbReference>
<dbReference type="Gene3D" id="3.90.1140.10">
    <property type="entry name" value="Cyclic phosphodiesterase"/>
    <property type="match status" value="1"/>
</dbReference>
<dbReference type="InterPro" id="IPR012386">
    <property type="entry name" value="Cyclic-nucl_3Pdiesterase"/>
</dbReference>
<dbReference type="InterPro" id="IPR009097">
    <property type="entry name" value="Cyclic_Pdiesterase"/>
</dbReference>
<dbReference type="PANTHER" id="PTHR28141">
    <property type="entry name" value="2',3'-CYCLIC-NUCLEOTIDE 3'-PHOSPHODIESTERASE"/>
    <property type="match status" value="1"/>
</dbReference>
<dbReference type="PANTHER" id="PTHR28141:SF1">
    <property type="entry name" value="2',3'-CYCLIC-NUCLEOTIDE 3'-PHOSPHODIESTERASE"/>
    <property type="match status" value="1"/>
</dbReference>
<dbReference type="Pfam" id="PF07823">
    <property type="entry name" value="CPDase"/>
    <property type="match status" value="1"/>
</dbReference>
<dbReference type="SUPFAM" id="SSF55144">
    <property type="entry name" value="LigT-like"/>
    <property type="match status" value="1"/>
</dbReference>
<keyword id="KW-0333">Golgi apparatus</keyword>
<keyword id="KW-0378">Hydrolase</keyword>
<keyword id="KW-1185">Reference proteome</keyword>
<sequence>MTLMSSLNTLFPGQPPKFEPHITISSNIDVDLDHPDKTKSDVYRILSASLVAIDSLPKNHSNLVTLGKVDSQRKFFKKLYFQVARDPNLVSFATIIRELFVQLPADIEQENMKKNPHLYTTDSHGNTVKKKSKQSQDGRIEAIDMPRIQSEAQEQASLWSVTEFDPHLSLVYNDLHPIDSALWRTIKTRIQDYLNIDNCDSDDLTDNGLGWDNGILKLVLCEGDVNDWVVLGSADLH</sequence>
<evidence type="ECO:0000250" key="1"/>
<evidence type="ECO:0000256" key="2">
    <source>
        <dbReference type="SAM" id="MobiDB-lite"/>
    </source>
</evidence>
<evidence type="ECO:0000305" key="3"/>
<name>CPD1_DEBHA</name>
<organism>
    <name type="scientific">Debaryomyces hansenii (strain ATCC 36239 / CBS 767 / BCRC 21394 / JCM 1990 / NBRC 0083 / IGC 2968)</name>
    <name type="common">Yeast</name>
    <name type="synonym">Torulaspora hansenii</name>
    <dbReference type="NCBI Taxonomy" id="284592"/>
    <lineage>
        <taxon>Eukaryota</taxon>
        <taxon>Fungi</taxon>
        <taxon>Dikarya</taxon>
        <taxon>Ascomycota</taxon>
        <taxon>Saccharomycotina</taxon>
        <taxon>Pichiomycetes</taxon>
        <taxon>Debaryomycetaceae</taxon>
        <taxon>Debaryomyces</taxon>
    </lineage>
</organism>
<gene>
    <name type="primary">CPD1</name>
    <name type="ordered locus">DEHA2G23430g</name>
</gene>
<accession>Q6BGW3</accession>
<protein>
    <recommendedName>
        <fullName>2',3'-cyclic-nucleotide 3'-phosphodiesterase</fullName>
        <shortName>CPDase</shortName>
        <ecNumber>3.1.4.37</ecNumber>
    </recommendedName>
</protein>
<reference key="1">
    <citation type="journal article" date="2004" name="Nature">
        <title>Genome evolution in yeasts.</title>
        <authorList>
            <person name="Dujon B."/>
            <person name="Sherman D."/>
            <person name="Fischer G."/>
            <person name="Durrens P."/>
            <person name="Casaregola S."/>
            <person name="Lafontaine I."/>
            <person name="de Montigny J."/>
            <person name="Marck C."/>
            <person name="Neuveglise C."/>
            <person name="Talla E."/>
            <person name="Goffard N."/>
            <person name="Frangeul L."/>
            <person name="Aigle M."/>
            <person name="Anthouard V."/>
            <person name="Babour A."/>
            <person name="Barbe V."/>
            <person name="Barnay S."/>
            <person name="Blanchin S."/>
            <person name="Beckerich J.-M."/>
            <person name="Beyne E."/>
            <person name="Bleykasten C."/>
            <person name="Boisrame A."/>
            <person name="Boyer J."/>
            <person name="Cattolico L."/>
            <person name="Confanioleri F."/>
            <person name="de Daruvar A."/>
            <person name="Despons L."/>
            <person name="Fabre E."/>
            <person name="Fairhead C."/>
            <person name="Ferry-Dumazet H."/>
            <person name="Groppi A."/>
            <person name="Hantraye F."/>
            <person name="Hennequin C."/>
            <person name="Jauniaux N."/>
            <person name="Joyet P."/>
            <person name="Kachouri R."/>
            <person name="Kerrest A."/>
            <person name="Koszul R."/>
            <person name="Lemaire M."/>
            <person name="Lesur I."/>
            <person name="Ma L."/>
            <person name="Muller H."/>
            <person name="Nicaud J.-M."/>
            <person name="Nikolski M."/>
            <person name="Oztas S."/>
            <person name="Ozier-Kalogeropoulos O."/>
            <person name="Pellenz S."/>
            <person name="Potier S."/>
            <person name="Richard G.-F."/>
            <person name="Straub M.-L."/>
            <person name="Suleau A."/>
            <person name="Swennen D."/>
            <person name="Tekaia F."/>
            <person name="Wesolowski-Louvel M."/>
            <person name="Westhof E."/>
            <person name="Wirth B."/>
            <person name="Zeniou-Meyer M."/>
            <person name="Zivanovic Y."/>
            <person name="Bolotin-Fukuhara M."/>
            <person name="Thierry A."/>
            <person name="Bouchier C."/>
            <person name="Caudron B."/>
            <person name="Scarpelli C."/>
            <person name="Gaillardin C."/>
            <person name="Weissenbach J."/>
            <person name="Wincker P."/>
            <person name="Souciet J.-L."/>
        </authorList>
    </citation>
    <scope>NUCLEOTIDE SEQUENCE [LARGE SCALE GENOMIC DNA]</scope>
    <source>
        <strain>ATCC 36239 / CBS 767 / BCRC 21394 / JCM 1990 / NBRC 0083 / IGC 2968</strain>
    </source>
</reference>
<proteinExistence type="inferred from homology"/>
<comment type="function">
    <text evidence="1">Involved in the metabolism of ADP-ribose 1',2'-cyclic phosphate which is produced as a consequence of tRNA splicing.</text>
</comment>
<comment type="catalytic activity">
    <reaction>
        <text>a nucleoside 2',3'-cyclic phosphate + H2O = a nucleoside 2'-phosphate + H(+)</text>
        <dbReference type="Rhea" id="RHEA:14489"/>
        <dbReference type="ChEBI" id="CHEBI:15377"/>
        <dbReference type="ChEBI" id="CHEBI:15378"/>
        <dbReference type="ChEBI" id="CHEBI:66954"/>
        <dbReference type="ChEBI" id="CHEBI:78552"/>
        <dbReference type="EC" id="3.1.4.37"/>
    </reaction>
</comment>
<comment type="subcellular location">
    <subcellularLocation>
        <location evidence="1">Golgi apparatus</location>
    </subcellularLocation>
</comment>
<comment type="similarity">
    <text evidence="3">Belongs to the 2H phosphoesterase superfamily. CPD1 family.</text>
</comment>